<feature type="chain" id="PRO_0000312410" description="Uncharacterized protein csb family protein DDB_G0271320">
    <location>
        <begin position="1"/>
        <end position="106"/>
    </location>
</feature>
<gene>
    <name type="ORF">DDB_G0271320</name>
</gene>
<reference key="1">
    <citation type="journal article" date="2002" name="Nature">
        <title>Sequence and analysis of chromosome 2 of Dictyostelium discoideum.</title>
        <authorList>
            <person name="Gloeckner G."/>
            <person name="Eichinger L."/>
            <person name="Szafranski K."/>
            <person name="Pachebat J.A."/>
            <person name="Bankier A.T."/>
            <person name="Dear P.H."/>
            <person name="Lehmann R."/>
            <person name="Baumgart C."/>
            <person name="Parra G."/>
            <person name="Abril J.F."/>
            <person name="Guigo R."/>
            <person name="Kumpf K."/>
            <person name="Tunggal B."/>
            <person name="Cox E.C."/>
            <person name="Quail M.A."/>
            <person name="Platzer M."/>
            <person name="Rosenthal A."/>
            <person name="Noegel A.A."/>
        </authorList>
    </citation>
    <scope>NUCLEOTIDE SEQUENCE [LARGE SCALE GENOMIC DNA]</scope>
    <source>
        <strain>AX4</strain>
    </source>
</reference>
<reference key="2">
    <citation type="journal article" date="2005" name="Nature">
        <title>The genome of the social amoeba Dictyostelium discoideum.</title>
        <authorList>
            <person name="Eichinger L."/>
            <person name="Pachebat J.A."/>
            <person name="Gloeckner G."/>
            <person name="Rajandream M.A."/>
            <person name="Sucgang R."/>
            <person name="Berriman M."/>
            <person name="Song J."/>
            <person name="Olsen R."/>
            <person name="Szafranski K."/>
            <person name="Xu Q."/>
            <person name="Tunggal B."/>
            <person name="Kummerfeld S."/>
            <person name="Madera M."/>
            <person name="Konfortov B.A."/>
            <person name="Rivero F."/>
            <person name="Bankier A.T."/>
            <person name="Lehmann R."/>
            <person name="Hamlin N."/>
            <person name="Davies R."/>
            <person name="Gaudet P."/>
            <person name="Fey P."/>
            <person name="Pilcher K."/>
            <person name="Chen G."/>
            <person name="Saunders D."/>
            <person name="Sodergren E.J."/>
            <person name="Davis P."/>
            <person name="Kerhornou A."/>
            <person name="Nie X."/>
            <person name="Hall N."/>
            <person name="Anjard C."/>
            <person name="Hemphill L."/>
            <person name="Bason N."/>
            <person name="Farbrother P."/>
            <person name="Desany B."/>
            <person name="Just E."/>
            <person name="Morio T."/>
            <person name="Rost R."/>
            <person name="Churcher C.M."/>
            <person name="Cooper J."/>
            <person name="Haydock S."/>
            <person name="van Driessche N."/>
            <person name="Cronin A."/>
            <person name="Goodhead I."/>
            <person name="Muzny D.M."/>
            <person name="Mourier T."/>
            <person name="Pain A."/>
            <person name="Lu M."/>
            <person name="Harper D."/>
            <person name="Lindsay R."/>
            <person name="Hauser H."/>
            <person name="James K.D."/>
            <person name="Quiles M."/>
            <person name="Madan Babu M."/>
            <person name="Saito T."/>
            <person name="Buchrieser C."/>
            <person name="Wardroper A."/>
            <person name="Felder M."/>
            <person name="Thangavelu M."/>
            <person name="Johnson D."/>
            <person name="Knights A."/>
            <person name="Loulseged H."/>
            <person name="Mungall K.L."/>
            <person name="Oliver K."/>
            <person name="Price C."/>
            <person name="Quail M.A."/>
            <person name="Urushihara H."/>
            <person name="Hernandez J."/>
            <person name="Rabbinowitsch E."/>
            <person name="Steffen D."/>
            <person name="Sanders M."/>
            <person name="Ma J."/>
            <person name="Kohara Y."/>
            <person name="Sharp S."/>
            <person name="Simmonds M.N."/>
            <person name="Spiegler S."/>
            <person name="Tivey A."/>
            <person name="Sugano S."/>
            <person name="White B."/>
            <person name="Walker D."/>
            <person name="Woodward J.R."/>
            <person name="Winckler T."/>
            <person name="Tanaka Y."/>
            <person name="Shaulsky G."/>
            <person name="Schleicher M."/>
            <person name="Weinstock G.M."/>
            <person name="Rosenthal A."/>
            <person name="Cox E.C."/>
            <person name="Chisholm R.L."/>
            <person name="Gibbs R.A."/>
            <person name="Loomis W.F."/>
            <person name="Platzer M."/>
            <person name="Kay R.R."/>
            <person name="Williams J.G."/>
            <person name="Dear P.H."/>
            <person name="Noegel A.A."/>
            <person name="Barrell B.G."/>
            <person name="Kuspa A."/>
        </authorList>
    </citation>
    <scope>NUCLEOTIDE SEQUENCE [LARGE SCALE GENOMIC DNA]</scope>
    <source>
        <strain>AX4</strain>
    </source>
</reference>
<name>CSBL2_DICDI</name>
<organism>
    <name type="scientific">Dictyostelium discoideum</name>
    <name type="common">Social amoeba</name>
    <dbReference type="NCBI Taxonomy" id="44689"/>
    <lineage>
        <taxon>Eukaryota</taxon>
        <taxon>Amoebozoa</taxon>
        <taxon>Evosea</taxon>
        <taxon>Eumycetozoa</taxon>
        <taxon>Dictyostelia</taxon>
        <taxon>Dictyosteliales</taxon>
        <taxon>Dictyosteliaceae</taxon>
        <taxon>Dictyostelium</taxon>
    </lineage>
</organism>
<comment type="similarity">
    <text evidence="1">Belongs to the csb family.</text>
</comment>
<comment type="sequence caution" evidence="1">
    <conflict type="erroneous gene model prediction">
        <sequence resource="EMBL-CDS" id="EAL71790"/>
    </conflict>
</comment>
<evidence type="ECO:0000305" key="1"/>
<protein>
    <recommendedName>
        <fullName>Uncharacterized protein csb family protein DDB_G0271320</fullName>
    </recommendedName>
</protein>
<sequence length="106" mass="12328">MTEKMHELKITIFTDKGRSTISGIDFPLPVLPYPAPYTFRLYGYKIEGPNLTNKEFKVKTGKIEYKGEEFDIPPSSKGSWRGVDEEMDLTYVTIYPSRQPKKVFHY</sequence>
<keyword id="KW-1185">Reference proteome</keyword>
<dbReference type="EMBL" id="AAFI02000006">
    <property type="protein sequence ID" value="EAL71790.1"/>
    <property type="status" value="ALT_SEQ"/>
    <property type="molecule type" value="Genomic_DNA"/>
</dbReference>
<dbReference type="RefSeq" id="XP_645649.1">
    <property type="nucleotide sequence ID" value="XM_640557.1"/>
</dbReference>
<dbReference type="PaxDb" id="44689-DDB0202862"/>
<dbReference type="EnsemblProtists" id="EAL71790">
    <property type="protein sequence ID" value="EAL71790"/>
    <property type="gene ID" value="DDB_G0271320"/>
</dbReference>
<dbReference type="GeneID" id="8617841"/>
<dbReference type="KEGG" id="ddi:DDB_G0271320"/>
<dbReference type="dictyBase" id="DDB_G0271320"/>
<dbReference type="VEuPathDB" id="AmoebaDB:DDB_G0271320"/>
<dbReference type="InParanoid" id="Q55BG3"/>
<dbReference type="PRO" id="PR:Q55BG3"/>
<dbReference type="Proteomes" id="UP000002195">
    <property type="component" value="Chromosome 2"/>
</dbReference>
<dbReference type="GO" id="GO:0007155">
    <property type="term" value="P:cell adhesion"/>
    <property type="evidence" value="ECO:0007669"/>
    <property type="project" value="InterPro"/>
</dbReference>
<dbReference type="InterPro" id="IPR008601">
    <property type="entry name" value="Dicty_CAD"/>
</dbReference>
<dbReference type="Pfam" id="PF05720">
    <property type="entry name" value="Dicty_CAD"/>
    <property type="match status" value="1"/>
</dbReference>
<accession>Q55BG3</accession>
<proteinExistence type="inferred from homology"/>